<keyword id="KW-0648">Protein biosynthesis</keyword>
<keyword id="KW-1185">Reference proteome</keyword>
<keyword id="KW-0808">Transferase</keyword>
<feature type="chain" id="PRO_1000020147" description="Methionyl-tRNA formyltransferase">
    <location>
        <begin position="1"/>
        <end position="305"/>
    </location>
</feature>
<feature type="binding site" evidence="1">
    <location>
        <begin position="109"/>
        <end position="112"/>
    </location>
    <ligand>
        <name>(6S)-5,6,7,8-tetrahydrofolate</name>
        <dbReference type="ChEBI" id="CHEBI:57453"/>
    </ligand>
</feature>
<accession>Q16AL2</accession>
<organism>
    <name type="scientific">Roseobacter denitrificans (strain ATCC 33942 / OCh 114)</name>
    <name type="common">Erythrobacter sp. (strain OCh 114)</name>
    <name type="synonym">Roseobacter denitrificans</name>
    <dbReference type="NCBI Taxonomy" id="375451"/>
    <lineage>
        <taxon>Bacteria</taxon>
        <taxon>Pseudomonadati</taxon>
        <taxon>Pseudomonadota</taxon>
        <taxon>Alphaproteobacteria</taxon>
        <taxon>Rhodobacterales</taxon>
        <taxon>Roseobacteraceae</taxon>
        <taxon>Roseobacter</taxon>
    </lineage>
</organism>
<dbReference type="EC" id="2.1.2.9" evidence="1"/>
<dbReference type="EMBL" id="CP000362">
    <property type="protein sequence ID" value="ABG30981.1"/>
    <property type="molecule type" value="Genomic_DNA"/>
</dbReference>
<dbReference type="RefSeq" id="WP_011567601.1">
    <property type="nucleotide sequence ID" value="NC_008209.1"/>
</dbReference>
<dbReference type="SMR" id="Q16AL2"/>
<dbReference type="STRING" id="375451.RD1_1339"/>
<dbReference type="KEGG" id="rde:RD1_1339"/>
<dbReference type="eggNOG" id="COG0223">
    <property type="taxonomic scope" value="Bacteria"/>
</dbReference>
<dbReference type="HOGENOM" id="CLU_033347_1_2_5"/>
<dbReference type="OrthoDB" id="9802815at2"/>
<dbReference type="Proteomes" id="UP000007029">
    <property type="component" value="Chromosome"/>
</dbReference>
<dbReference type="GO" id="GO:0005829">
    <property type="term" value="C:cytosol"/>
    <property type="evidence" value="ECO:0007669"/>
    <property type="project" value="TreeGrafter"/>
</dbReference>
<dbReference type="GO" id="GO:0004479">
    <property type="term" value="F:methionyl-tRNA formyltransferase activity"/>
    <property type="evidence" value="ECO:0007669"/>
    <property type="project" value="UniProtKB-UniRule"/>
</dbReference>
<dbReference type="CDD" id="cd08646">
    <property type="entry name" value="FMT_core_Met-tRNA-FMT_N"/>
    <property type="match status" value="1"/>
</dbReference>
<dbReference type="CDD" id="cd08704">
    <property type="entry name" value="Met_tRNA_FMT_C"/>
    <property type="match status" value="1"/>
</dbReference>
<dbReference type="FunFam" id="3.40.50.12230:FF:000001">
    <property type="entry name" value="Methionyl-tRNA formyltransferase"/>
    <property type="match status" value="1"/>
</dbReference>
<dbReference type="Gene3D" id="3.40.50.12230">
    <property type="match status" value="1"/>
</dbReference>
<dbReference type="HAMAP" id="MF_00182">
    <property type="entry name" value="Formyl_trans"/>
    <property type="match status" value="1"/>
</dbReference>
<dbReference type="InterPro" id="IPR005794">
    <property type="entry name" value="Fmt"/>
</dbReference>
<dbReference type="InterPro" id="IPR005793">
    <property type="entry name" value="Formyl_trans_C"/>
</dbReference>
<dbReference type="InterPro" id="IPR002376">
    <property type="entry name" value="Formyl_transf_N"/>
</dbReference>
<dbReference type="InterPro" id="IPR036477">
    <property type="entry name" value="Formyl_transf_N_sf"/>
</dbReference>
<dbReference type="InterPro" id="IPR011034">
    <property type="entry name" value="Formyl_transferase-like_C_sf"/>
</dbReference>
<dbReference type="InterPro" id="IPR001555">
    <property type="entry name" value="GART_AS"/>
</dbReference>
<dbReference type="InterPro" id="IPR044135">
    <property type="entry name" value="Met-tRNA-FMT_C"/>
</dbReference>
<dbReference type="InterPro" id="IPR041711">
    <property type="entry name" value="Met-tRNA-FMT_N"/>
</dbReference>
<dbReference type="NCBIfam" id="TIGR00460">
    <property type="entry name" value="fmt"/>
    <property type="match status" value="1"/>
</dbReference>
<dbReference type="PANTHER" id="PTHR11138">
    <property type="entry name" value="METHIONYL-TRNA FORMYLTRANSFERASE"/>
    <property type="match status" value="1"/>
</dbReference>
<dbReference type="PANTHER" id="PTHR11138:SF5">
    <property type="entry name" value="METHIONYL-TRNA FORMYLTRANSFERASE, MITOCHONDRIAL"/>
    <property type="match status" value="1"/>
</dbReference>
<dbReference type="Pfam" id="PF02911">
    <property type="entry name" value="Formyl_trans_C"/>
    <property type="match status" value="1"/>
</dbReference>
<dbReference type="Pfam" id="PF00551">
    <property type="entry name" value="Formyl_trans_N"/>
    <property type="match status" value="1"/>
</dbReference>
<dbReference type="SUPFAM" id="SSF50486">
    <property type="entry name" value="FMT C-terminal domain-like"/>
    <property type="match status" value="1"/>
</dbReference>
<dbReference type="SUPFAM" id="SSF53328">
    <property type="entry name" value="Formyltransferase"/>
    <property type="match status" value="1"/>
</dbReference>
<dbReference type="PROSITE" id="PS00373">
    <property type="entry name" value="GART"/>
    <property type="match status" value="1"/>
</dbReference>
<comment type="function">
    <text evidence="1">Attaches a formyl group to the free amino group of methionyl-tRNA(fMet). The formyl group appears to play a dual role in the initiator identity of N-formylmethionyl-tRNA by promoting its recognition by IF2 and preventing the misappropriation of this tRNA by the elongation apparatus.</text>
</comment>
<comment type="catalytic activity">
    <reaction evidence="1">
        <text>L-methionyl-tRNA(fMet) + (6R)-10-formyltetrahydrofolate = N-formyl-L-methionyl-tRNA(fMet) + (6S)-5,6,7,8-tetrahydrofolate + H(+)</text>
        <dbReference type="Rhea" id="RHEA:24380"/>
        <dbReference type="Rhea" id="RHEA-COMP:9952"/>
        <dbReference type="Rhea" id="RHEA-COMP:9953"/>
        <dbReference type="ChEBI" id="CHEBI:15378"/>
        <dbReference type="ChEBI" id="CHEBI:57453"/>
        <dbReference type="ChEBI" id="CHEBI:78530"/>
        <dbReference type="ChEBI" id="CHEBI:78844"/>
        <dbReference type="ChEBI" id="CHEBI:195366"/>
        <dbReference type="EC" id="2.1.2.9"/>
    </reaction>
</comment>
<comment type="similarity">
    <text evidence="1">Belongs to the Fmt family.</text>
</comment>
<protein>
    <recommendedName>
        <fullName evidence="1">Methionyl-tRNA formyltransferase</fullName>
        <ecNumber evidence="1">2.1.2.9</ecNumber>
    </recommendedName>
</protein>
<proteinExistence type="inferred from homology"/>
<sequence>MRLVFMGTPDFSVPVLEALVAAGHEIACVYSQPPRPAGRGKKDRPSPVQARAEALGLPVRHPVSLRSDEALADFAGLQAEVAVVVAYGLILPQAILDAPTRGCLNIHASLLPRWRGAAPIHRAIMAGDAQTGVCIMQMEAGLDTGPVLAREAVDIGPEETTAQLHDRLSALGAALIVDTLARLDQLEAVPQPEDGVTYAAKIDKAEAQVDWDQPAEDVDRLIRGLSPFPGAWTLLGDTRVKLLGSRIAEASGVPGTVRLNPLRVVCGTGAVELTQVQRAGKAVQSAADFLNGSAIEDGTLFKGKS</sequence>
<evidence type="ECO:0000255" key="1">
    <source>
        <dbReference type="HAMAP-Rule" id="MF_00182"/>
    </source>
</evidence>
<gene>
    <name evidence="1" type="primary">fmt</name>
    <name type="ordered locus">RD1_1339</name>
</gene>
<name>FMT_ROSDO</name>
<reference key="1">
    <citation type="journal article" date="2007" name="J. Bacteriol.">
        <title>The complete genome sequence of Roseobacter denitrificans reveals a mixotrophic rather than photosynthetic metabolism.</title>
        <authorList>
            <person name="Swingley W.D."/>
            <person name="Sadekar S."/>
            <person name="Mastrian S.D."/>
            <person name="Matthies H.J."/>
            <person name="Hao J."/>
            <person name="Ramos H."/>
            <person name="Acharya C.R."/>
            <person name="Conrad A.L."/>
            <person name="Taylor H.L."/>
            <person name="Dejesa L.C."/>
            <person name="Shah M.K."/>
            <person name="O'Huallachain M.E."/>
            <person name="Lince M.T."/>
            <person name="Blankenship R.E."/>
            <person name="Beatty J.T."/>
            <person name="Touchman J.W."/>
        </authorList>
    </citation>
    <scope>NUCLEOTIDE SEQUENCE [LARGE SCALE GENOMIC DNA]</scope>
    <source>
        <strain>ATCC 33942 / OCh 114</strain>
    </source>
</reference>